<gene>
    <name evidence="1" type="primary">rsgA</name>
    <name type="ordered locus">aq_168</name>
</gene>
<reference key="1">
    <citation type="journal article" date="1998" name="Nature">
        <title>The complete genome of the hyperthermophilic bacterium Aquifex aeolicus.</title>
        <authorList>
            <person name="Deckert G."/>
            <person name="Warren P.V."/>
            <person name="Gaasterland T."/>
            <person name="Young W.G."/>
            <person name="Lenox A.L."/>
            <person name="Graham D.E."/>
            <person name="Overbeek R."/>
            <person name="Snead M.A."/>
            <person name="Keller M."/>
            <person name="Aujay M."/>
            <person name="Huber R."/>
            <person name="Feldman R.A."/>
            <person name="Short J.M."/>
            <person name="Olsen G.J."/>
            <person name="Swanson R.V."/>
        </authorList>
    </citation>
    <scope>NUCLEOTIDE SEQUENCE [LARGE SCALE GENOMIC DNA]</scope>
    <source>
        <strain>VF5</strain>
    </source>
</reference>
<reference key="2">
    <citation type="submission" date="2009-02" db="PDB data bank">
        <title>Crystal structure of YjeQ from Aquifex aeolicus.</title>
        <authorList>
            <consortium name="RIKEN structural genomics initiative (RSGI)"/>
        </authorList>
    </citation>
    <scope>X-RAY CRYSTALLOGRAPHY (1.9 ANGSTROMS) IN COMPLEX WITH GDP AND ZINC IONS</scope>
</reference>
<keyword id="KW-0002">3D-structure</keyword>
<keyword id="KW-0963">Cytoplasm</keyword>
<keyword id="KW-0342">GTP-binding</keyword>
<keyword id="KW-0378">Hydrolase</keyword>
<keyword id="KW-0479">Metal-binding</keyword>
<keyword id="KW-0547">Nucleotide-binding</keyword>
<keyword id="KW-1185">Reference proteome</keyword>
<keyword id="KW-0690">Ribosome biogenesis</keyword>
<keyword id="KW-0694">RNA-binding</keyword>
<keyword id="KW-0699">rRNA-binding</keyword>
<keyword id="KW-0862">Zinc</keyword>
<name>RSGA_AQUAE</name>
<sequence>MGKKELKRGLVVDREAQMIGVYLFEDGKTYRGIPRGKVLKKTKINAGDYVWGEVVDPNTFAIEEVEERKNLLIRPKVANVDRVIIVETLKMPEFNNYLLDNMLVVYEYFKVEPVIVFNKIDLLNEEEKKELERMDSIYRDAGYDVLKVSAKTGEGIDELVDYLEGFICILAGPSGVGKSSILSRLTGEELRTQEVSEKTERGRHTTTGVRLIPFGKGSFVGDTPGFSKVEATMFVKPREVRNYFREFLRYQCKYPDCTHTNEPGCAVKEAVKNGEISCERYKSYLKIIKVYLEEIKELCRED</sequence>
<dbReference type="EC" id="3.6.1.-" evidence="1"/>
<dbReference type="EMBL" id="AE000657">
    <property type="protein sequence ID" value="AAC06518.1"/>
    <property type="status" value="ALT_FRAME"/>
    <property type="molecule type" value="Genomic_DNA"/>
</dbReference>
<dbReference type="PIR" id="H70315">
    <property type="entry name" value="H70315"/>
</dbReference>
<dbReference type="PDB" id="2YV5">
    <property type="method" value="X-ray"/>
    <property type="resolution" value="1.90 A"/>
    <property type="chains" value="A=1-302"/>
</dbReference>
<dbReference type="PDBsum" id="2YV5"/>
<dbReference type="SMR" id="O66555"/>
<dbReference type="FunCoup" id="O66555">
    <property type="interactions" value="331"/>
</dbReference>
<dbReference type="STRING" id="224324.aq_168"/>
<dbReference type="EnsemblBacteria" id="AAC06518">
    <property type="protein sequence ID" value="AAC06518"/>
    <property type="gene ID" value="aq_168"/>
</dbReference>
<dbReference type="eggNOG" id="COG1162">
    <property type="taxonomic scope" value="Bacteria"/>
</dbReference>
<dbReference type="HOGENOM" id="CLU_1575270_0_0_0"/>
<dbReference type="InParanoid" id="O66555"/>
<dbReference type="EvolutionaryTrace" id="O66555"/>
<dbReference type="Proteomes" id="UP000000798">
    <property type="component" value="Chromosome"/>
</dbReference>
<dbReference type="GO" id="GO:0005737">
    <property type="term" value="C:cytoplasm"/>
    <property type="evidence" value="ECO:0007669"/>
    <property type="project" value="UniProtKB-SubCell"/>
</dbReference>
<dbReference type="GO" id="GO:0005525">
    <property type="term" value="F:GTP binding"/>
    <property type="evidence" value="ECO:0007669"/>
    <property type="project" value="UniProtKB-UniRule"/>
</dbReference>
<dbReference type="GO" id="GO:0003924">
    <property type="term" value="F:GTPase activity"/>
    <property type="evidence" value="ECO:0007669"/>
    <property type="project" value="UniProtKB-UniRule"/>
</dbReference>
<dbReference type="GO" id="GO:0046872">
    <property type="term" value="F:metal ion binding"/>
    <property type="evidence" value="ECO:0007669"/>
    <property type="project" value="UniProtKB-KW"/>
</dbReference>
<dbReference type="GO" id="GO:0019843">
    <property type="term" value="F:rRNA binding"/>
    <property type="evidence" value="ECO:0007669"/>
    <property type="project" value="UniProtKB-KW"/>
</dbReference>
<dbReference type="GO" id="GO:0042274">
    <property type="term" value="P:ribosomal small subunit biogenesis"/>
    <property type="evidence" value="ECO:0007669"/>
    <property type="project" value="UniProtKB-UniRule"/>
</dbReference>
<dbReference type="CDD" id="cd01854">
    <property type="entry name" value="YjeQ_EngC"/>
    <property type="match status" value="1"/>
</dbReference>
<dbReference type="Gene3D" id="2.40.50.140">
    <property type="entry name" value="Nucleic acid-binding proteins"/>
    <property type="match status" value="1"/>
</dbReference>
<dbReference type="Gene3D" id="3.40.50.300">
    <property type="entry name" value="P-loop containing nucleotide triphosphate hydrolases"/>
    <property type="match status" value="1"/>
</dbReference>
<dbReference type="Gene3D" id="1.10.40.50">
    <property type="entry name" value="Probable gtpase engc, domain 3"/>
    <property type="match status" value="1"/>
</dbReference>
<dbReference type="HAMAP" id="MF_01820">
    <property type="entry name" value="GTPase_RsgA"/>
    <property type="match status" value="1"/>
</dbReference>
<dbReference type="InterPro" id="IPR030378">
    <property type="entry name" value="G_CP_dom"/>
</dbReference>
<dbReference type="InterPro" id="IPR012340">
    <property type="entry name" value="NA-bd_OB-fold"/>
</dbReference>
<dbReference type="InterPro" id="IPR027417">
    <property type="entry name" value="P-loop_NTPase"/>
</dbReference>
<dbReference type="InterPro" id="IPR004881">
    <property type="entry name" value="Ribosome_biogen_GTPase_RsgA"/>
</dbReference>
<dbReference type="InterPro" id="IPR010914">
    <property type="entry name" value="RsgA_GTPase_dom"/>
</dbReference>
<dbReference type="NCBIfam" id="TIGR00157">
    <property type="entry name" value="ribosome small subunit-dependent GTPase A"/>
    <property type="match status" value="1"/>
</dbReference>
<dbReference type="PANTHER" id="PTHR32120">
    <property type="entry name" value="SMALL RIBOSOMAL SUBUNIT BIOGENESIS GTPASE RSGA"/>
    <property type="match status" value="1"/>
</dbReference>
<dbReference type="PANTHER" id="PTHR32120:SF11">
    <property type="entry name" value="SMALL RIBOSOMAL SUBUNIT BIOGENESIS GTPASE RSGA 1, MITOCHONDRIAL-RELATED"/>
    <property type="match status" value="1"/>
</dbReference>
<dbReference type="Pfam" id="PF03193">
    <property type="entry name" value="RsgA_GTPase"/>
    <property type="match status" value="1"/>
</dbReference>
<dbReference type="SUPFAM" id="SSF50249">
    <property type="entry name" value="Nucleic acid-binding proteins"/>
    <property type="match status" value="1"/>
</dbReference>
<dbReference type="SUPFAM" id="SSF52540">
    <property type="entry name" value="P-loop containing nucleoside triphosphate hydrolases"/>
    <property type="match status" value="1"/>
</dbReference>
<dbReference type="PROSITE" id="PS50936">
    <property type="entry name" value="ENGC_GTPASE"/>
    <property type="match status" value="1"/>
</dbReference>
<dbReference type="PROSITE" id="PS51721">
    <property type="entry name" value="G_CP"/>
    <property type="match status" value="1"/>
</dbReference>
<proteinExistence type="evidence at protein level"/>
<accession>O66555</accession>
<protein>
    <recommendedName>
        <fullName evidence="1">Small ribosomal subunit biogenesis GTPase RsgA</fullName>
        <ecNumber evidence="1">3.6.1.-</ecNumber>
    </recommendedName>
</protein>
<feature type="chain" id="PRO_0000171459" description="Small ribosomal subunit biogenesis GTPase RsgA">
    <location>
        <begin position="1"/>
        <end position="302"/>
    </location>
</feature>
<feature type="domain" description="CP-type G" evidence="2">
    <location>
        <begin position="69"/>
        <end position="229"/>
    </location>
</feature>
<feature type="binding site" evidence="1 5">
    <location>
        <begin position="118"/>
        <end position="121"/>
    </location>
    <ligand>
        <name>GTP</name>
        <dbReference type="ChEBI" id="CHEBI:37565"/>
    </ligand>
</feature>
<feature type="binding site" evidence="1 5">
    <location>
        <begin position="172"/>
        <end position="180"/>
    </location>
    <ligand>
        <name>GTP</name>
        <dbReference type="ChEBI" id="CHEBI:37565"/>
    </ligand>
</feature>
<feature type="binding site" evidence="1">
    <location>
        <position position="252"/>
    </location>
    <ligand>
        <name>Zn(2+)</name>
        <dbReference type="ChEBI" id="CHEBI:29105"/>
    </ligand>
</feature>
<feature type="binding site" evidence="1 3">
    <location>
        <position position="257"/>
    </location>
    <ligand>
        <name>Zn(2+)</name>
        <dbReference type="ChEBI" id="CHEBI:29105"/>
    </ligand>
</feature>
<feature type="binding site" evidence="1 3">
    <location>
        <position position="259"/>
    </location>
    <ligand>
        <name>Zn(2+)</name>
        <dbReference type="ChEBI" id="CHEBI:29105"/>
    </ligand>
</feature>
<feature type="binding site" evidence="1 3">
    <location>
        <position position="265"/>
    </location>
    <ligand>
        <name>Zn(2+)</name>
        <dbReference type="ChEBI" id="CHEBI:29105"/>
    </ligand>
</feature>
<feature type="strand" evidence="6">
    <location>
        <begin position="7"/>
        <end position="15"/>
    </location>
</feature>
<feature type="strand" evidence="6">
    <location>
        <begin position="18"/>
        <end position="23"/>
    </location>
</feature>
<feature type="turn" evidence="6">
    <location>
        <begin position="24"/>
        <end position="26"/>
    </location>
</feature>
<feature type="strand" evidence="6">
    <location>
        <begin position="29"/>
        <end position="34"/>
    </location>
</feature>
<feature type="strand" evidence="6">
    <location>
        <begin position="36"/>
        <end position="38"/>
    </location>
</feature>
<feature type="strand" evidence="6">
    <location>
        <begin position="49"/>
        <end position="56"/>
    </location>
</feature>
<feature type="strand" evidence="6">
    <location>
        <begin position="59"/>
        <end position="65"/>
    </location>
</feature>
<feature type="turn" evidence="6">
    <location>
        <begin position="73"/>
        <end position="76"/>
    </location>
</feature>
<feature type="strand" evidence="6">
    <location>
        <begin position="77"/>
        <end position="79"/>
    </location>
</feature>
<feature type="strand" evidence="6">
    <location>
        <begin position="82"/>
        <end position="87"/>
    </location>
</feature>
<feature type="turn" evidence="6">
    <location>
        <begin position="90"/>
        <end position="93"/>
    </location>
</feature>
<feature type="helix" evidence="6">
    <location>
        <begin position="96"/>
        <end position="108"/>
    </location>
</feature>
<feature type="strand" evidence="6">
    <location>
        <begin position="112"/>
        <end position="117"/>
    </location>
</feature>
<feature type="helix" evidence="6">
    <location>
        <begin position="120"/>
        <end position="122"/>
    </location>
</feature>
<feature type="helix" evidence="6">
    <location>
        <begin position="125"/>
        <end position="140"/>
    </location>
</feature>
<feature type="strand" evidence="6">
    <location>
        <begin position="144"/>
        <end position="147"/>
    </location>
</feature>
<feature type="turn" evidence="6">
    <location>
        <begin position="150"/>
        <end position="152"/>
    </location>
</feature>
<feature type="helix" evidence="6">
    <location>
        <begin position="156"/>
        <end position="162"/>
    </location>
</feature>
<feature type="turn" evidence="6">
    <location>
        <begin position="163"/>
        <end position="165"/>
    </location>
</feature>
<feature type="strand" evidence="6">
    <location>
        <begin position="167"/>
        <end position="171"/>
    </location>
</feature>
<feature type="helix" evidence="6">
    <location>
        <begin position="178"/>
        <end position="186"/>
    </location>
</feature>
<feature type="strand" evidence="6">
    <location>
        <begin position="209"/>
        <end position="214"/>
    </location>
</feature>
<feature type="turn" evidence="6">
    <location>
        <begin position="215"/>
        <end position="217"/>
    </location>
</feature>
<feature type="strand" evidence="6">
    <location>
        <begin position="218"/>
        <end position="223"/>
    </location>
</feature>
<feature type="helix" evidence="6">
    <location>
        <begin position="231"/>
        <end position="233"/>
    </location>
</feature>
<feature type="helix" evidence="6">
    <location>
        <begin position="237"/>
        <end position="243"/>
    </location>
</feature>
<feature type="helix" evidence="6">
    <location>
        <begin position="245"/>
        <end position="247"/>
    </location>
</feature>
<feature type="helix" evidence="6">
    <location>
        <begin position="248"/>
        <end position="253"/>
    </location>
</feature>
<feature type="strand" evidence="6">
    <location>
        <begin position="259"/>
        <end position="261"/>
    </location>
</feature>
<feature type="helix" evidence="6">
    <location>
        <begin position="266"/>
        <end position="272"/>
    </location>
</feature>
<feature type="helix" evidence="6">
    <location>
        <begin position="278"/>
        <end position="287"/>
    </location>
</feature>
<feature type="helix" evidence="6">
    <location>
        <begin position="295"/>
        <end position="298"/>
    </location>
</feature>
<evidence type="ECO:0000255" key="1">
    <source>
        <dbReference type="HAMAP-Rule" id="MF_01820"/>
    </source>
</evidence>
<evidence type="ECO:0000255" key="2">
    <source>
        <dbReference type="PROSITE-ProRule" id="PRU01058"/>
    </source>
</evidence>
<evidence type="ECO:0000269" key="3">
    <source ref="2"/>
</evidence>
<evidence type="ECO:0000305" key="4"/>
<evidence type="ECO:0000305" key="5">
    <source ref="2"/>
</evidence>
<evidence type="ECO:0007829" key="6">
    <source>
        <dbReference type="PDB" id="2YV5"/>
    </source>
</evidence>
<comment type="function">
    <text evidence="1">One of several proteins that assist in the late maturation steps of the functional core of the 30S ribosomal subunit. Helps release RbfA from mature subunits. May play a role in the assembly of ribosomal proteins into the subunit. Circularly permuted GTPase that catalyzes slow GTP hydrolysis, GTPase activity is stimulated by the 30S ribosomal subunit.</text>
</comment>
<comment type="cofactor">
    <cofactor evidence="1 3">
        <name>Zn(2+)</name>
        <dbReference type="ChEBI" id="CHEBI:29105"/>
    </cofactor>
    <text evidence="1 3">Binds 1 zinc ion per subunit.</text>
</comment>
<comment type="subunit">
    <text evidence="1">Monomer. Associates with 30S ribosomal subunit, binds 16S rRNA.</text>
</comment>
<comment type="subcellular location">
    <subcellularLocation>
        <location evidence="1">Cytoplasm</location>
    </subcellularLocation>
</comment>
<comment type="similarity">
    <text evidence="1">Belongs to the TRAFAC class YlqF/YawG GTPase family. RsgA subfamily.</text>
</comment>
<comment type="sequence caution" evidence="4">
    <conflict type="frameshift">
        <sequence resource="EMBL-CDS" id="AAC06518"/>
    </conflict>
</comment>
<organism>
    <name type="scientific">Aquifex aeolicus (strain VF5)</name>
    <dbReference type="NCBI Taxonomy" id="224324"/>
    <lineage>
        <taxon>Bacteria</taxon>
        <taxon>Pseudomonadati</taxon>
        <taxon>Aquificota</taxon>
        <taxon>Aquificia</taxon>
        <taxon>Aquificales</taxon>
        <taxon>Aquificaceae</taxon>
        <taxon>Aquifex</taxon>
    </lineage>
</organism>